<feature type="chain" id="PRO_1000118827" description="Holo-[acyl-carrier-protein] synthase">
    <location>
        <begin position="1"/>
        <end position="120"/>
    </location>
</feature>
<feature type="binding site" evidence="1">
    <location>
        <position position="8"/>
    </location>
    <ligand>
        <name>Mg(2+)</name>
        <dbReference type="ChEBI" id="CHEBI:18420"/>
    </ligand>
</feature>
<feature type="binding site" evidence="1">
    <location>
        <position position="58"/>
    </location>
    <ligand>
        <name>Mg(2+)</name>
        <dbReference type="ChEBI" id="CHEBI:18420"/>
    </ligand>
</feature>
<comment type="function">
    <text evidence="1">Transfers the 4'-phosphopantetheine moiety from coenzyme A to a Ser of acyl-carrier-protein.</text>
</comment>
<comment type="catalytic activity">
    <reaction evidence="1">
        <text>apo-[ACP] + CoA = holo-[ACP] + adenosine 3',5'-bisphosphate + H(+)</text>
        <dbReference type="Rhea" id="RHEA:12068"/>
        <dbReference type="Rhea" id="RHEA-COMP:9685"/>
        <dbReference type="Rhea" id="RHEA-COMP:9690"/>
        <dbReference type="ChEBI" id="CHEBI:15378"/>
        <dbReference type="ChEBI" id="CHEBI:29999"/>
        <dbReference type="ChEBI" id="CHEBI:57287"/>
        <dbReference type="ChEBI" id="CHEBI:58343"/>
        <dbReference type="ChEBI" id="CHEBI:64479"/>
        <dbReference type="EC" id="2.7.8.7"/>
    </reaction>
</comment>
<comment type="cofactor">
    <cofactor evidence="1">
        <name>Mg(2+)</name>
        <dbReference type="ChEBI" id="CHEBI:18420"/>
    </cofactor>
</comment>
<comment type="subcellular location">
    <subcellularLocation>
        <location evidence="1">Cytoplasm</location>
    </subcellularLocation>
</comment>
<comment type="similarity">
    <text evidence="1">Belongs to the P-Pant transferase superfamily. AcpS family.</text>
</comment>
<protein>
    <recommendedName>
        <fullName evidence="1">Holo-[acyl-carrier-protein] synthase</fullName>
        <shortName evidence="1">Holo-ACP synthase</shortName>
        <ecNumber evidence="1">2.7.8.7</ecNumber>
    </recommendedName>
    <alternativeName>
        <fullName evidence="1">4'-phosphopantetheinyl transferase AcpS</fullName>
    </alternativeName>
</protein>
<reference key="1">
    <citation type="journal article" date="2010" name="Genome Biol.">
        <title>Structure and dynamics of the pan-genome of Streptococcus pneumoniae and closely related species.</title>
        <authorList>
            <person name="Donati C."/>
            <person name="Hiller N.L."/>
            <person name="Tettelin H."/>
            <person name="Muzzi A."/>
            <person name="Croucher N.J."/>
            <person name="Angiuoli S.V."/>
            <person name="Oggioni M."/>
            <person name="Dunning Hotopp J.C."/>
            <person name="Hu F.Z."/>
            <person name="Riley D.R."/>
            <person name="Covacci A."/>
            <person name="Mitchell T.J."/>
            <person name="Bentley S.D."/>
            <person name="Kilian M."/>
            <person name="Ehrlich G.D."/>
            <person name="Rappuoli R."/>
            <person name="Moxon E.R."/>
            <person name="Masignani V."/>
        </authorList>
    </citation>
    <scope>NUCLEOTIDE SEQUENCE [LARGE SCALE GENOMIC DNA]</scope>
    <source>
        <strain>70585</strain>
    </source>
</reference>
<accession>C1C8T7</accession>
<name>ACPS_STRP7</name>
<dbReference type="EC" id="2.7.8.7" evidence="1"/>
<dbReference type="EMBL" id="CP000918">
    <property type="protein sequence ID" value="ACO16584.1"/>
    <property type="molecule type" value="Genomic_DNA"/>
</dbReference>
<dbReference type="RefSeq" id="WP_000635008.1">
    <property type="nucleotide sequence ID" value="NC_012468.1"/>
</dbReference>
<dbReference type="SMR" id="C1C8T7"/>
<dbReference type="KEGG" id="snm:SP70585_1738"/>
<dbReference type="HOGENOM" id="CLU_089696_1_2_9"/>
<dbReference type="Proteomes" id="UP000002211">
    <property type="component" value="Chromosome"/>
</dbReference>
<dbReference type="GO" id="GO:0005829">
    <property type="term" value="C:cytosol"/>
    <property type="evidence" value="ECO:0007669"/>
    <property type="project" value="TreeGrafter"/>
</dbReference>
<dbReference type="GO" id="GO:0008897">
    <property type="term" value="F:holo-[acyl-carrier-protein] synthase activity"/>
    <property type="evidence" value="ECO:0007669"/>
    <property type="project" value="UniProtKB-UniRule"/>
</dbReference>
<dbReference type="GO" id="GO:0000287">
    <property type="term" value="F:magnesium ion binding"/>
    <property type="evidence" value="ECO:0007669"/>
    <property type="project" value="UniProtKB-UniRule"/>
</dbReference>
<dbReference type="GO" id="GO:0006633">
    <property type="term" value="P:fatty acid biosynthetic process"/>
    <property type="evidence" value="ECO:0007669"/>
    <property type="project" value="UniProtKB-UniRule"/>
</dbReference>
<dbReference type="GO" id="GO:0019878">
    <property type="term" value="P:lysine biosynthetic process via aminoadipic acid"/>
    <property type="evidence" value="ECO:0007669"/>
    <property type="project" value="TreeGrafter"/>
</dbReference>
<dbReference type="Gene3D" id="3.90.470.20">
    <property type="entry name" value="4'-phosphopantetheinyl transferase domain"/>
    <property type="match status" value="1"/>
</dbReference>
<dbReference type="HAMAP" id="MF_00101">
    <property type="entry name" value="AcpS"/>
    <property type="match status" value="1"/>
</dbReference>
<dbReference type="InterPro" id="IPR008278">
    <property type="entry name" value="4-PPantetheinyl_Trfase_dom"/>
</dbReference>
<dbReference type="InterPro" id="IPR037143">
    <property type="entry name" value="4-PPantetheinyl_Trfase_dom_sf"/>
</dbReference>
<dbReference type="InterPro" id="IPR002582">
    <property type="entry name" value="ACPS"/>
</dbReference>
<dbReference type="InterPro" id="IPR050559">
    <property type="entry name" value="P-Pant_transferase_sf"/>
</dbReference>
<dbReference type="InterPro" id="IPR004568">
    <property type="entry name" value="Ppantetheine-prot_Trfase_dom"/>
</dbReference>
<dbReference type="NCBIfam" id="TIGR00516">
    <property type="entry name" value="acpS"/>
    <property type="match status" value="1"/>
</dbReference>
<dbReference type="NCBIfam" id="TIGR00556">
    <property type="entry name" value="pantethn_trn"/>
    <property type="match status" value="1"/>
</dbReference>
<dbReference type="PANTHER" id="PTHR12215:SF10">
    <property type="entry name" value="L-AMINOADIPATE-SEMIALDEHYDE DEHYDROGENASE-PHOSPHOPANTETHEINYL TRANSFERASE"/>
    <property type="match status" value="1"/>
</dbReference>
<dbReference type="PANTHER" id="PTHR12215">
    <property type="entry name" value="PHOSPHOPANTETHEINE TRANSFERASE"/>
    <property type="match status" value="1"/>
</dbReference>
<dbReference type="Pfam" id="PF01648">
    <property type="entry name" value="ACPS"/>
    <property type="match status" value="1"/>
</dbReference>
<dbReference type="SUPFAM" id="SSF56214">
    <property type="entry name" value="4'-phosphopantetheinyl transferase"/>
    <property type="match status" value="1"/>
</dbReference>
<gene>
    <name evidence="1" type="primary">acpS</name>
    <name type="ordered locus">SP70585_1738</name>
</gene>
<proteinExistence type="inferred from homology"/>
<sequence length="120" mass="13388">MIVGHGIDIEELASIESAVTRHEGFAKRVLTAQEMERFTSLKGRRQIEYLAGRWSAKEAFSKAMGTGISKLGFQDLEVLNNERGAPYFSQAPFSGKIWLSISHTDQFVTASVILEENHES</sequence>
<keyword id="KW-0963">Cytoplasm</keyword>
<keyword id="KW-0275">Fatty acid biosynthesis</keyword>
<keyword id="KW-0276">Fatty acid metabolism</keyword>
<keyword id="KW-0444">Lipid biosynthesis</keyword>
<keyword id="KW-0443">Lipid metabolism</keyword>
<keyword id="KW-0460">Magnesium</keyword>
<keyword id="KW-0479">Metal-binding</keyword>
<keyword id="KW-0808">Transferase</keyword>
<organism>
    <name type="scientific">Streptococcus pneumoniae (strain 70585)</name>
    <dbReference type="NCBI Taxonomy" id="488221"/>
    <lineage>
        <taxon>Bacteria</taxon>
        <taxon>Bacillati</taxon>
        <taxon>Bacillota</taxon>
        <taxon>Bacilli</taxon>
        <taxon>Lactobacillales</taxon>
        <taxon>Streptococcaceae</taxon>
        <taxon>Streptococcus</taxon>
    </lineage>
</organism>
<evidence type="ECO:0000255" key="1">
    <source>
        <dbReference type="HAMAP-Rule" id="MF_00101"/>
    </source>
</evidence>